<protein>
    <recommendedName>
        <fullName>Alkaline protease 2</fullName>
        <shortName>ALP2</shortName>
        <ecNumber>3.4.21.63</ecNumber>
    </recommendedName>
    <alternativeName>
        <fullName>Autophagic serine protease alp2</fullName>
    </alternativeName>
    <allergenName>Asp f 18</allergenName>
</protein>
<gene>
    <name type="primary">alp2</name>
    <name type="ORF">AFUB_056750</name>
</gene>
<name>ALP2_ASPFC</name>
<comment type="function">
    <text evidence="1">Alkaline protease that allows assimilation of proteinaceous substrates. Acts as a significant virulence factor in invasive aspergillosis. Required for regular sporulation (By similarity).</text>
</comment>
<comment type="catalytic activity">
    <reaction>
        <text>Hydrolysis of proteins with broad specificity, and of Bz-Arg-OEt &gt; Ac-Tyr-OEt. Does not hydrolyze peptide amides.</text>
        <dbReference type="EC" id="3.4.21.63"/>
    </reaction>
</comment>
<comment type="allergen">
    <text evidence="1">Acts as a major allergen in patients suffering from extrinsic bronchial asthma. Binds to IgE.</text>
</comment>
<comment type="similarity">
    <text evidence="4">Belongs to the peptidase S8 family.</text>
</comment>
<feature type="signal peptide" evidence="2">
    <location>
        <begin position="1"/>
        <end position="16"/>
    </location>
</feature>
<feature type="propeptide" id="PRO_0000412302" evidence="1">
    <location>
        <begin position="17"/>
        <end position="136"/>
    </location>
</feature>
<feature type="chain" id="PRO_0000412303" description="Alkaline protease 2">
    <location>
        <begin position="137"/>
        <end position="495"/>
    </location>
</feature>
<feature type="domain" description="Inhibitor I9" evidence="2">
    <location>
        <begin position="43"/>
        <end position="136"/>
    </location>
</feature>
<feature type="domain" description="Peptidase S8" evidence="3">
    <location>
        <begin position="146"/>
        <end position="452"/>
    </location>
</feature>
<feature type="active site" description="Charge relay system" evidence="3">
    <location>
        <position position="182"/>
    </location>
</feature>
<feature type="active site" description="Charge relay system" evidence="3">
    <location>
        <position position="214"/>
    </location>
</feature>
<feature type="active site" description="Charge relay system" evidence="3">
    <location>
        <position position="380"/>
    </location>
</feature>
<feature type="glycosylation site" description="N-linked (GlcNAc...) asparagine" evidence="2">
    <location>
        <position position="284"/>
    </location>
</feature>
<feature type="glycosylation site" description="N-linked (GlcNAc...) asparagine" evidence="2">
    <location>
        <position position="447"/>
    </location>
</feature>
<feature type="glycosylation site" description="N-linked (GlcNAc...) asparagine" evidence="2">
    <location>
        <position position="460"/>
    </location>
</feature>
<keyword id="KW-0020">Allergen</keyword>
<keyword id="KW-0325">Glycoprotein</keyword>
<keyword id="KW-0378">Hydrolase</keyword>
<keyword id="KW-0645">Protease</keyword>
<keyword id="KW-0720">Serine protease</keyword>
<keyword id="KW-0732">Signal</keyword>
<keyword id="KW-0749">Sporulation</keyword>
<keyword id="KW-0843">Virulence</keyword>
<keyword id="KW-0865">Zymogen</keyword>
<reference key="1">
    <citation type="journal article" date="2008" name="PLoS Genet.">
        <title>Genomic islands in the pathogenic filamentous fungus Aspergillus fumigatus.</title>
        <authorList>
            <person name="Fedorova N.D."/>
            <person name="Khaldi N."/>
            <person name="Joardar V.S."/>
            <person name="Maiti R."/>
            <person name="Amedeo P."/>
            <person name="Anderson M.J."/>
            <person name="Crabtree J."/>
            <person name="Silva J.C."/>
            <person name="Badger J.H."/>
            <person name="Albarraq A."/>
            <person name="Angiuoli S."/>
            <person name="Bussey H."/>
            <person name="Bowyer P."/>
            <person name="Cotty P.J."/>
            <person name="Dyer P.S."/>
            <person name="Egan A."/>
            <person name="Galens K."/>
            <person name="Fraser-Liggett C.M."/>
            <person name="Haas B.J."/>
            <person name="Inman J.M."/>
            <person name="Kent R."/>
            <person name="Lemieux S."/>
            <person name="Malavazi I."/>
            <person name="Orvis J."/>
            <person name="Roemer T."/>
            <person name="Ronning C.M."/>
            <person name="Sundaram J.P."/>
            <person name="Sutton G."/>
            <person name="Turner G."/>
            <person name="Venter J.C."/>
            <person name="White O.R."/>
            <person name="Whitty B.R."/>
            <person name="Youngman P."/>
            <person name="Wolfe K.H."/>
            <person name="Goldman G.H."/>
            <person name="Wortman J.R."/>
            <person name="Jiang B."/>
            <person name="Denning D.W."/>
            <person name="Nierman W.C."/>
        </authorList>
    </citation>
    <scope>NUCLEOTIDE SEQUENCE [LARGE SCALE GENOMIC DNA]</scope>
    <source>
        <strain>CBS 144.89 / FGSC A1163 / CEA10</strain>
    </source>
</reference>
<proteinExistence type="inferred from homology"/>
<sequence>MKGYLSLSILPLLVAASPVVVDSIHNGAAPILSSMNAKEVPDSYIVVFKKHVNAESAAAHHSWVQDIHSAQNERVELRKRSLFGFGEEAYLGLKNTFDIAGSLVGYSGHFHEDVIEQVRKHPDVEYIEKDSEVHTMEDPTVEKSAPWGLARISHRDSLSFGTFNKYLYASEGGEGVDAYTIDTGINVDHVDFEGRAQWGKTIPTDDEDADGNGHGTHCSGTIAGRKYGVAKKANLYAVKVLRSSGSGTMSDVVAGVEWAVKSHLKKVKDAKDGKIKGFKGSVANMSLGGGKSRTLEAAVNAGVEAGLHFAVAAGNDNADACNYSPAAAENPITVGASTLQDERAYFSNYGKCTDIFAPGLNILSTWIGSKHAVNTISGTSMASPHIAGLLAYFVSLQPSKDSAFAVDELTPKKLKKDIIAIATQGALTDIPSDTPNLLAWNGGGSSNYTDIIASGGYKVNASVKDRFEGLVHKAEKLLTEELGAIYSEIHDAAVA</sequence>
<dbReference type="EC" id="3.4.21.63"/>
<dbReference type="EMBL" id="DS499597">
    <property type="protein sequence ID" value="EDP51664.1"/>
    <property type="molecule type" value="Genomic_DNA"/>
</dbReference>
<dbReference type="SMR" id="B0Y473"/>
<dbReference type="Allergome" id="70">
    <property type="allergen name" value="Asp f 18"/>
</dbReference>
<dbReference type="GlyCosmos" id="B0Y473">
    <property type="glycosylation" value="3 sites, No reported glycans"/>
</dbReference>
<dbReference type="EnsemblFungi" id="EDP51664">
    <property type="protein sequence ID" value="EDP51664"/>
    <property type="gene ID" value="AFUB_056750"/>
</dbReference>
<dbReference type="VEuPathDB" id="FungiDB:AFUB_056750"/>
<dbReference type="HOGENOM" id="CLU_011263_1_4_1"/>
<dbReference type="OrthoDB" id="52299at5052"/>
<dbReference type="PhylomeDB" id="B0Y473"/>
<dbReference type="Proteomes" id="UP000001699">
    <property type="component" value="Unassembled WGS sequence"/>
</dbReference>
<dbReference type="GO" id="GO:0005773">
    <property type="term" value="C:vacuole"/>
    <property type="evidence" value="ECO:0007669"/>
    <property type="project" value="GOC"/>
</dbReference>
<dbReference type="GO" id="GO:0004252">
    <property type="term" value="F:serine-type endopeptidase activity"/>
    <property type="evidence" value="ECO:0007669"/>
    <property type="project" value="EnsemblFungi"/>
</dbReference>
<dbReference type="GO" id="GO:0000425">
    <property type="term" value="P:pexophagy"/>
    <property type="evidence" value="ECO:0007669"/>
    <property type="project" value="EnsemblFungi"/>
</dbReference>
<dbReference type="GO" id="GO:0007039">
    <property type="term" value="P:protein catabolic process in the vacuole"/>
    <property type="evidence" value="ECO:0007669"/>
    <property type="project" value="EnsemblFungi"/>
</dbReference>
<dbReference type="GO" id="GO:0006508">
    <property type="term" value="P:proteolysis"/>
    <property type="evidence" value="ECO:0007669"/>
    <property type="project" value="UniProtKB-KW"/>
</dbReference>
<dbReference type="GO" id="GO:0030435">
    <property type="term" value="P:sporulation resulting in formation of a cellular spore"/>
    <property type="evidence" value="ECO:0007669"/>
    <property type="project" value="UniProtKB-KW"/>
</dbReference>
<dbReference type="CDD" id="cd04077">
    <property type="entry name" value="Peptidases_S8_PCSK9_ProteinaseK_like"/>
    <property type="match status" value="1"/>
</dbReference>
<dbReference type="FunFam" id="3.30.70.80:FF:000006">
    <property type="entry name" value="Autophagic serine protease Alp2"/>
    <property type="match status" value="1"/>
</dbReference>
<dbReference type="FunFam" id="3.40.50.200:FF:000007">
    <property type="entry name" value="Subtilisin-like serine protease"/>
    <property type="match status" value="1"/>
</dbReference>
<dbReference type="Gene3D" id="3.30.70.80">
    <property type="entry name" value="Peptidase S8 propeptide/proteinase inhibitor I9"/>
    <property type="match status" value="1"/>
</dbReference>
<dbReference type="Gene3D" id="3.40.50.200">
    <property type="entry name" value="Peptidase S8/S53 domain"/>
    <property type="match status" value="1"/>
</dbReference>
<dbReference type="InterPro" id="IPR034193">
    <property type="entry name" value="PCSK9_ProteinaseK-like"/>
</dbReference>
<dbReference type="InterPro" id="IPR000209">
    <property type="entry name" value="Peptidase_S8/S53_dom"/>
</dbReference>
<dbReference type="InterPro" id="IPR036852">
    <property type="entry name" value="Peptidase_S8/S53_dom_sf"/>
</dbReference>
<dbReference type="InterPro" id="IPR022398">
    <property type="entry name" value="Peptidase_S8_His-AS"/>
</dbReference>
<dbReference type="InterPro" id="IPR023828">
    <property type="entry name" value="Peptidase_S8_Ser-AS"/>
</dbReference>
<dbReference type="InterPro" id="IPR050131">
    <property type="entry name" value="Peptidase_S8_subtilisin-like"/>
</dbReference>
<dbReference type="InterPro" id="IPR015500">
    <property type="entry name" value="Peptidase_S8_subtilisin-rel"/>
</dbReference>
<dbReference type="InterPro" id="IPR010259">
    <property type="entry name" value="S8pro/Inhibitor_I9"/>
</dbReference>
<dbReference type="InterPro" id="IPR037045">
    <property type="entry name" value="S8pro/Inhibitor_I9_sf"/>
</dbReference>
<dbReference type="PANTHER" id="PTHR43806:SF11">
    <property type="entry name" value="CEREVISIN-RELATED"/>
    <property type="match status" value="1"/>
</dbReference>
<dbReference type="PANTHER" id="PTHR43806">
    <property type="entry name" value="PEPTIDASE S8"/>
    <property type="match status" value="1"/>
</dbReference>
<dbReference type="Pfam" id="PF05922">
    <property type="entry name" value="Inhibitor_I9"/>
    <property type="match status" value="1"/>
</dbReference>
<dbReference type="Pfam" id="PF00082">
    <property type="entry name" value="Peptidase_S8"/>
    <property type="match status" value="1"/>
</dbReference>
<dbReference type="PRINTS" id="PR00723">
    <property type="entry name" value="SUBTILISIN"/>
</dbReference>
<dbReference type="SUPFAM" id="SSF54897">
    <property type="entry name" value="Protease propeptides/inhibitors"/>
    <property type="match status" value="1"/>
</dbReference>
<dbReference type="SUPFAM" id="SSF52743">
    <property type="entry name" value="Subtilisin-like"/>
    <property type="match status" value="1"/>
</dbReference>
<dbReference type="PROSITE" id="PS51892">
    <property type="entry name" value="SUBTILASE"/>
    <property type="match status" value="1"/>
</dbReference>
<dbReference type="PROSITE" id="PS00137">
    <property type="entry name" value="SUBTILASE_HIS"/>
    <property type="match status" value="1"/>
</dbReference>
<dbReference type="PROSITE" id="PS00138">
    <property type="entry name" value="SUBTILASE_SER"/>
    <property type="match status" value="1"/>
</dbReference>
<accession>B0Y473</accession>
<evidence type="ECO:0000250" key="1"/>
<evidence type="ECO:0000255" key="2"/>
<evidence type="ECO:0000255" key="3">
    <source>
        <dbReference type="PROSITE-ProRule" id="PRU01240"/>
    </source>
</evidence>
<evidence type="ECO:0000305" key="4"/>
<organism>
    <name type="scientific">Aspergillus fumigatus (strain CBS 144.89 / FGSC A1163 / CEA10)</name>
    <name type="common">Neosartorya fumigata</name>
    <dbReference type="NCBI Taxonomy" id="451804"/>
    <lineage>
        <taxon>Eukaryota</taxon>
        <taxon>Fungi</taxon>
        <taxon>Dikarya</taxon>
        <taxon>Ascomycota</taxon>
        <taxon>Pezizomycotina</taxon>
        <taxon>Eurotiomycetes</taxon>
        <taxon>Eurotiomycetidae</taxon>
        <taxon>Eurotiales</taxon>
        <taxon>Aspergillaceae</taxon>
        <taxon>Aspergillus</taxon>
        <taxon>Aspergillus subgen. Fumigati</taxon>
    </lineage>
</organism>